<gene>
    <name type="ordered locus">Rv2402</name>
</gene>
<dbReference type="EC" id="3.2.1.28"/>
<dbReference type="EMBL" id="AL123456">
    <property type="protein sequence ID" value="CCP45193.1"/>
    <property type="status" value="ALT_INIT"/>
    <property type="molecule type" value="Genomic_DNA"/>
</dbReference>
<dbReference type="PIR" id="E70683">
    <property type="entry name" value="E70683"/>
</dbReference>
<dbReference type="RefSeq" id="NP_216918.3">
    <property type="nucleotide sequence ID" value="NC_000962.3"/>
</dbReference>
<dbReference type="RefSeq" id="WP_003901398.1">
    <property type="nucleotide sequence ID" value="NC_000962.3"/>
</dbReference>
<dbReference type="RefSeq" id="WP_003913344.1">
    <property type="nucleotide sequence ID" value="NZ_NVQJ01000054.1"/>
</dbReference>
<dbReference type="SMR" id="P71741"/>
<dbReference type="FunCoup" id="P71741">
    <property type="interactions" value="23"/>
</dbReference>
<dbReference type="STRING" id="83332.Rv2402"/>
<dbReference type="CAZy" id="GH15">
    <property type="family name" value="Glycoside Hydrolase Family 15"/>
</dbReference>
<dbReference type="PaxDb" id="83332-Rv2402"/>
<dbReference type="DNASU" id="885661"/>
<dbReference type="GeneID" id="885661"/>
<dbReference type="KEGG" id="mtu:Rv2402"/>
<dbReference type="PATRIC" id="fig|83332.12.peg.2688"/>
<dbReference type="TubercuList" id="Rv2402"/>
<dbReference type="eggNOG" id="COG3387">
    <property type="taxonomic scope" value="Bacteria"/>
</dbReference>
<dbReference type="InParanoid" id="P71741"/>
<dbReference type="OrthoDB" id="3902805at2"/>
<dbReference type="UniPathway" id="UPA00300">
    <property type="reaction ID" value="UER00535"/>
</dbReference>
<dbReference type="Proteomes" id="UP000001584">
    <property type="component" value="Chromosome"/>
</dbReference>
<dbReference type="GO" id="GO:0005886">
    <property type="term" value="C:plasma membrane"/>
    <property type="evidence" value="ECO:0007005"/>
    <property type="project" value="MTBBASE"/>
</dbReference>
<dbReference type="GO" id="GO:0004555">
    <property type="term" value="F:alpha,alpha-trehalase activity"/>
    <property type="evidence" value="ECO:0007669"/>
    <property type="project" value="UniProtKB-EC"/>
</dbReference>
<dbReference type="GO" id="GO:0015927">
    <property type="term" value="F:trehalase activity"/>
    <property type="evidence" value="ECO:0000314"/>
    <property type="project" value="MTBBASE"/>
</dbReference>
<dbReference type="GO" id="GO:0005993">
    <property type="term" value="P:trehalose catabolic process"/>
    <property type="evidence" value="ECO:0000314"/>
    <property type="project" value="MTBBASE"/>
</dbReference>
<dbReference type="FunFam" id="1.50.10.10:FF:000005">
    <property type="entry name" value="Glycosyl hydrolase, glucoamylase"/>
    <property type="match status" value="1"/>
</dbReference>
<dbReference type="Gene3D" id="1.50.10.10">
    <property type="match status" value="1"/>
</dbReference>
<dbReference type="InterPro" id="IPR008928">
    <property type="entry name" value="6-hairpin_glycosidase_sf"/>
</dbReference>
<dbReference type="InterPro" id="IPR012341">
    <property type="entry name" value="6hp_glycosidase-like_sf"/>
</dbReference>
<dbReference type="InterPro" id="IPR011613">
    <property type="entry name" value="GH15-like"/>
</dbReference>
<dbReference type="InterPro" id="IPR045582">
    <property type="entry name" value="Trehalase-like_N"/>
</dbReference>
<dbReference type="PANTHER" id="PTHR31616">
    <property type="entry name" value="TREHALASE"/>
    <property type="match status" value="1"/>
</dbReference>
<dbReference type="PANTHER" id="PTHR31616:SF10">
    <property type="entry name" value="TREHALASE"/>
    <property type="match status" value="1"/>
</dbReference>
<dbReference type="Pfam" id="PF00723">
    <property type="entry name" value="Glyco_hydro_15"/>
    <property type="match status" value="1"/>
</dbReference>
<dbReference type="Pfam" id="PF19291">
    <property type="entry name" value="TREH_N"/>
    <property type="match status" value="1"/>
</dbReference>
<dbReference type="SUPFAM" id="SSF48208">
    <property type="entry name" value="Six-hairpin glycosidases"/>
    <property type="match status" value="1"/>
</dbReference>
<evidence type="ECO:0000256" key="1">
    <source>
        <dbReference type="SAM" id="MobiDB-lite"/>
    </source>
</evidence>
<evidence type="ECO:0000269" key="2">
    <source>
    </source>
</evidence>
<evidence type="ECO:0000269" key="3">
    <source>
    </source>
</evidence>
<evidence type="ECO:0000305" key="4"/>
<feature type="chain" id="PRO_0000413980" description="Trehalase">
    <location>
        <begin position="1"/>
        <end position="680"/>
    </location>
</feature>
<feature type="region of interest" description="Disordered" evidence="1">
    <location>
        <begin position="1"/>
        <end position="27"/>
    </location>
</feature>
<keyword id="KW-0119">Carbohydrate metabolism</keyword>
<keyword id="KW-0903">Direct protein sequencing</keyword>
<keyword id="KW-0326">Glycosidase</keyword>
<keyword id="KW-0378">Hydrolase</keyword>
<keyword id="KW-1185">Reference proteome</keyword>
<organism>
    <name type="scientific">Mycobacterium tuberculosis (strain ATCC 25618 / H37Rv)</name>
    <dbReference type="NCBI Taxonomy" id="83332"/>
    <lineage>
        <taxon>Bacteria</taxon>
        <taxon>Bacillati</taxon>
        <taxon>Actinomycetota</taxon>
        <taxon>Actinomycetes</taxon>
        <taxon>Mycobacteriales</taxon>
        <taxon>Mycobacteriaceae</taxon>
        <taxon>Mycobacterium</taxon>
        <taxon>Mycobacterium tuberculosis complex</taxon>
    </lineage>
</organism>
<protein>
    <recommendedName>
        <fullName>Trehalase</fullName>
        <ecNumber>3.2.1.28</ecNumber>
    </recommendedName>
    <alternativeName>
        <fullName>Alpha,alpha-trehalase</fullName>
    </alternativeName>
    <alternativeName>
        <fullName>Alpha,alpha-trehalose glucohydrolase</fullName>
    </alternativeName>
</protein>
<comment type="function">
    <text evidence="2">Catalyzes the hydrolysis of alpha,alpha-trehalose into two molecules of D-glucose.</text>
</comment>
<comment type="catalytic activity">
    <reaction evidence="2">
        <text>alpha,alpha-trehalose + H2O = alpha-D-glucose + beta-D-glucose</text>
        <dbReference type="Rhea" id="RHEA:32675"/>
        <dbReference type="ChEBI" id="CHEBI:15377"/>
        <dbReference type="ChEBI" id="CHEBI:15903"/>
        <dbReference type="ChEBI" id="CHEBI:16551"/>
        <dbReference type="ChEBI" id="CHEBI:17925"/>
        <dbReference type="EC" id="3.2.1.28"/>
    </reaction>
</comment>
<comment type="cofactor">
    <cofactor evidence="2">
        <name>phosphate</name>
        <dbReference type="ChEBI" id="CHEBI:43474"/>
    </cofactor>
    <text evidence="2">Shows an absolute requirement for inorganic phosphate for activity. The function of the phosphate may involve stabilizing the protein conformation and/or initiating protein aggregation. Unlike the threhalase ortholog in M.smegmatis, does not require Mg(2+) for activity.</text>
</comment>
<comment type="pathway">
    <text>Glycan degradation; trehalose degradation; D-glucose from alpha,alpha-trehalose: step 1/1.</text>
</comment>
<comment type="subunit">
    <text evidence="2">Homomultimer.</text>
</comment>
<comment type="similarity">
    <text evidence="4">Belongs to the glycosyl hydrolase 15 family.</text>
</comment>
<comment type="sequence caution" evidence="3">
    <conflict type="erroneous initiation">
        <sequence resource="EMBL-CDS" id="CCP45193"/>
    </conflict>
    <text>Truncated N-terminus.</text>
</comment>
<accession>P71741</accession>
<accession>L0TB43</accession>
<name>TREH_MYCTU</name>
<proteinExistence type="evidence at protein level"/>
<sequence length="680" mass="76518">MVLHAQPPDQSTETAREAKALAGATDGATATSADLHAPMALSSSSPLRNPFPPIADYAFLSDWETTCLISPAGSVEWLCVPRPDSPSVFGAILDRSAGHFRLGPYGVSVPSARRYLPGSLIMETTWQTHTGWLIVRDALVMGKWHDIERRSRTHRRTPMDWDAEHILLRTVRCVSGTVELMMSCEPAFDYHRLGATWEYSAEAYGEAIARANTEPDAHPTLRLTTNLRIGLEGREARARTRMKEGDDVFVALSWTKHPPPQTYDEAADKMWQTTECWRQWINIGNFPDHPWRAYLQRSALTLKGLTYSPTGALLAASTTSLPETPRGERNWDYRYAWIRDSTFALWGLYTLGLDREADDFFAFIADVSGANNNERHPLQVMYGVGGERSLVEAELHHLSGYDHARPVRIGNGAYNQRQHDIWGSILDSFYLHAKSREQVPENLWPVLKRQVEEAIKHWREPDRGIWEVRGEPQHFTSSKVMCWVALDRGAKLAERQGEKSYAQQWRAIADEIKADILEHGVDSRGVFTQRYGDEALDASLLLVVLTRFLPPDDPRVRNTVLAIADELTEDGLVLRYRVHETDDGLSGEEGTFTICSFWLVSALVEIGEVGRAKRLCERLLSFASPLLLYAEEIEPRSGRHLGNFPQAFTHLALINAVVHVIRAEEEADSSGMFQPANAPM</sequence>
<reference key="1">
    <citation type="journal article" date="1998" name="Nature">
        <title>Deciphering the biology of Mycobacterium tuberculosis from the complete genome sequence.</title>
        <authorList>
            <person name="Cole S.T."/>
            <person name="Brosch R."/>
            <person name="Parkhill J."/>
            <person name="Garnier T."/>
            <person name="Churcher C.M."/>
            <person name="Harris D.E."/>
            <person name="Gordon S.V."/>
            <person name="Eiglmeier K."/>
            <person name="Gas S."/>
            <person name="Barry C.E. III"/>
            <person name="Tekaia F."/>
            <person name="Badcock K."/>
            <person name="Basham D."/>
            <person name="Brown D."/>
            <person name="Chillingworth T."/>
            <person name="Connor R."/>
            <person name="Davies R.M."/>
            <person name="Devlin K."/>
            <person name="Feltwell T."/>
            <person name="Gentles S."/>
            <person name="Hamlin N."/>
            <person name="Holroyd S."/>
            <person name="Hornsby T."/>
            <person name="Jagels K."/>
            <person name="Krogh A."/>
            <person name="McLean J."/>
            <person name="Moule S."/>
            <person name="Murphy L.D."/>
            <person name="Oliver S."/>
            <person name="Osborne J."/>
            <person name="Quail M.A."/>
            <person name="Rajandream M.A."/>
            <person name="Rogers J."/>
            <person name="Rutter S."/>
            <person name="Seeger K."/>
            <person name="Skelton S."/>
            <person name="Squares S."/>
            <person name="Squares R."/>
            <person name="Sulston J.E."/>
            <person name="Taylor K."/>
            <person name="Whitehead S."/>
            <person name="Barrell B.G."/>
        </authorList>
    </citation>
    <scope>NUCLEOTIDE SEQUENCE [LARGE SCALE GENOMIC DNA]</scope>
    <source>
        <strain>ATCC 25618 / H37Rv</strain>
    </source>
</reference>
<reference key="2">
    <citation type="journal article" date="2022" name="Genomics">
        <title>Deep N-terminomics of Mycobacterium tuberculosis H37Rv extensively correct annotated encoding genes.</title>
        <authorList>
            <person name="Shi J."/>
            <person name="Meng S."/>
            <person name="Wan L."/>
            <person name="Zhang Z."/>
            <person name="Jiang S."/>
            <person name="Zhu H."/>
            <person name="Dai E."/>
            <person name="Chang L."/>
            <person name="Gao H."/>
            <person name="Wan K."/>
            <person name="Zhang L."/>
            <person name="Zhao X."/>
            <person name="Liu H."/>
            <person name="Lyu Z."/>
            <person name="Zhang Y."/>
            <person name="Xu P."/>
        </authorList>
    </citation>
    <scope>PROTEIN SEQUENCE OF 2-16 AND 20-48</scope>
    <scope>SEQUENCE REVISION TO N-TERMINUS</scope>
    <source>
        <strain>H37Rv</strain>
    </source>
</reference>
<reference key="3">
    <citation type="journal article" date="2007" name="FEBS J.">
        <title>A novel trehalase from Mycobacterium smegmatis - purification, properties, requirements.</title>
        <authorList>
            <person name="Carroll J.D."/>
            <person name="Pastuszak I."/>
            <person name="Edavana V.K."/>
            <person name="Pan Y.T."/>
            <person name="Elbein A.D."/>
        </authorList>
    </citation>
    <scope>FUNCTION</scope>
    <scope>CATALYTIC ACTIVITY</scope>
    <scope>COFACTOR</scope>
    <scope>SUBUNIT</scope>
    <source>
        <strain>ATCC 25618 / H37Rv</strain>
    </source>
</reference>
<reference key="4">
    <citation type="journal article" date="2011" name="Mol. Cell. Proteomics">
        <title>Proteogenomic analysis of Mycobacterium tuberculosis by high resolution mass spectrometry.</title>
        <authorList>
            <person name="Kelkar D.S."/>
            <person name="Kumar D."/>
            <person name="Kumar P."/>
            <person name="Balakrishnan L."/>
            <person name="Muthusamy B."/>
            <person name="Yadav A.K."/>
            <person name="Shrivastava P."/>
            <person name="Marimuthu A."/>
            <person name="Anand S."/>
            <person name="Sundaram H."/>
            <person name="Kingsbury R."/>
            <person name="Harsha H.C."/>
            <person name="Nair B."/>
            <person name="Prasad T.S."/>
            <person name="Chauhan D.S."/>
            <person name="Katoch K."/>
            <person name="Katoch V.M."/>
            <person name="Kumar P."/>
            <person name="Chaerkady R."/>
            <person name="Ramachandran S."/>
            <person name="Dash D."/>
            <person name="Pandey A."/>
        </authorList>
    </citation>
    <scope>IDENTIFICATION BY MASS SPECTROMETRY [LARGE SCALE ANALYSIS]</scope>
    <source>
        <strain>ATCC 25618 / H37Rv</strain>
    </source>
</reference>